<dbReference type="EC" id="3.2.1.78"/>
<dbReference type="EMBL" id="CH476596">
    <property type="protein sequence ID" value="EAU37631.1"/>
    <property type="status" value="ALT_INIT"/>
    <property type="molecule type" value="Genomic_DNA"/>
</dbReference>
<dbReference type="RefSeq" id="XP_001211847.1">
    <property type="nucleotide sequence ID" value="XM_001211847.1"/>
</dbReference>
<dbReference type="SMR" id="Q0CUG5"/>
<dbReference type="STRING" id="341663.Q0CUG5"/>
<dbReference type="GlyCosmos" id="Q0CUG5">
    <property type="glycosylation" value="2 sites, No reported glycans"/>
</dbReference>
<dbReference type="EnsemblFungi" id="EAU37631">
    <property type="protein sequence ID" value="EAU37631"/>
    <property type="gene ID" value="ATEG_02669"/>
</dbReference>
<dbReference type="GeneID" id="4317245"/>
<dbReference type="eggNOG" id="ENOG502QS4Q">
    <property type="taxonomic scope" value="Eukaryota"/>
</dbReference>
<dbReference type="OMA" id="YNWIEST"/>
<dbReference type="OrthoDB" id="406631at2759"/>
<dbReference type="Proteomes" id="UP000007963">
    <property type="component" value="Unassembled WGS sequence"/>
</dbReference>
<dbReference type="GO" id="GO:0005576">
    <property type="term" value="C:extracellular region"/>
    <property type="evidence" value="ECO:0007669"/>
    <property type="project" value="UniProtKB-SubCell"/>
</dbReference>
<dbReference type="GO" id="GO:0016985">
    <property type="term" value="F:mannan endo-1,4-beta-mannosidase activity"/>
    <property type="evidence" value="ECO:0007669"/>
    <property type="project" value="UniProtKB-EC"/>
</dbReference>
<dbReference type="GO" id="GO:0046355">
    <property type="term" value="P:mannan catabolic process"/>
    <property type="evidence" value="ECO:0007669"/>
    <property type="project" value="UniProtKB-ARBA"/>
</dbReference>
<dbReference type="FunFam" id="3.20.20.80:FF:000076">
    <property type="entry name" value="Mannan endo-1,4-beta-mannosidase A"/>
    <property type="match status" value="1"/>
</dbReference>
<dbReference type="Gene3D" id="3.20.20.80">
    <property type="entry name" value="Glycosidases"/>
    <property type="match status" value="1"/>
</dbReference>
<dbReference type="InterPro" id="IPR001547">
    <property type="entry name" value="Glyco_hydro_5"/>
</dbReference>
<dbReference type="InterPro" id="IPR017853">
    <property type="entry name" value="Glycoside_hydrolase_SF"/>
</dbReference>
<dbReference type="InterPro" id="IPR045053">
    <property type="entry name" value="MAN-like"/>
</dbReference>
<dbReference type="PANTHER" id="PTHR31451">
    <property type="match status" value="1"/>
</dbReference>
<dbReference type="PANTHER" id="PTHR31451:SF39">
    <property type="entry name" value="MANNAN ENDO-1,4-BETA-MANNOSIDASE 1"/>
    <property type="match status" value="1"/>
</dbReference>
<dbReference type="Pfam" id="PF00150">
    <property type="entry name" value="Cellulase"/>
    <property type="match status" value="1"/>
</dbReference>
<dbReference type="SUPFAM" id="SSF51445">
    <property type="entry name" value="(Trans)glycosidases"/>
    <property type="match status" value="1"/>
</dbReference>
<accession>Q0CUG5</accession>
<protein>
    <recommendedName>
        <fullName>Probable mannan endo-1,4-beta-mannosidase A-2</fullName>
        <ecNumber>3.2.1.78</ecNumber>
    </recommendedName>
    <alternativeName>
        <fullName>Endo-beta-1,4-mannanase A-2</fullName>
    </alternativeName>
</protein>
<keyword id="KW-0119">Carbohydrate metabolism</keyword>
<keyword id="KW-0325">Glycoprotein</keyword>
<keyword id="KW-0326">Glycosidase</keyword>
<keyword id="KW-0378">Hydrolase</keyword>
<keyword id="KW-1185">Reference proteome</keyword>
<keyword id="KW-0964">Secreted</keyword>
<keyword id="KW-0732">Signal</keyword>
<reference key="1">
    <citation type="submission" date="2005-09" db="EMBL/GenBank/DDBJ databases">
        <title>Annotation of the Aspergillus terreus NIH2624 genome.</title>
        <authorList>
            <person name="Birren B.W."/>
            <person name="Lander E.S."/>
            <person name="Galagan J.E."/>
            <person name="Nusbaum C."/>
            <person name="Devon K."/>
            <person name="Henn M."/>
            <person name="Ma L.-J."/>
            <person name="Jaffe D.B."/>
            <person name="Butler J."/>
            <person name="Alvarez P."/>
            <person name="Gnerre S."/>
            <person name="Grabherr M."/>
            <person name="Kleber M."/>
            <person name="Mauceli E.W."/>
            <person name="Brockman W."/>
            <person name="Rounsley S."/>
            <person name="Young S.K."/>
            <person name="LaButti K."/>
            <person name="Pushparaj V."/>
            <person name="DeCaprio D."/>
            <person name="Crawford M."/>
            <person name="Koehrsen M."/>
            <person name="Engels R."/>
            <person name="Montgomery P."/>
            <person name="Pearson M."/>
            <person name="Howarth C."/>
            <person name="Larson L."/>
            <person name="Luoma S."/>
            <person name="White J."/>
            <person name="Alvarado L."/>
            <person name="Kodira C.D."/>
            <person name="Zeng Q."/>
            <person name="Oleary S."/>
            <person name="Yandava C."/>
            <person name="Denning D.W."/>
            <person name="Nierman W.C."/>
            <person name="Milne T."/>
            <person name="Madden K."/>
        </authorList>
    </citation>
    <scope>NUCLEOTIDE SEQUENCE [LARGE SCALE GENOMIC DNA]</scope>
    <source>
        <strain>NIH 2624 / FGSC A1156</strain>
    </source>
</reference>
<feature type="signal peptide" evidence="4">
    <location>
        <begin position="1"/>
        <end position="21"/>
    </location>
</feature>
<feature type="chain" id="PRO_0000393704" description="Probable mannan endo-1,4-beta-mannosidase A-2">
    <location>
        <begin position="22"/>
        <end position="396"/>
    </location>
</feature>
<feature type="active site" description="Proton donor" evidence="3">
    <location>
        <position position="213"/>
    </location>
</feature>
<feature type="active site" description="Nucleophile" evidence="3">
    <location>
        <position position="321"/>
    </location>
</feature>
<feature type="binding site" evidence="2">
    <location>
        <position position="99"/>
    </location>
    <ligand>
        <name>substrate</name>
    </ligand>
</feature>
<feature type="binding site" evidence="2">
    <location>
        <position position="212"/>
    </location>
    <ligand>
        <name>substrate</name>
    </ligand>
</feature>
<feature type="binding site" evidence="2">
    <location>
        <position position="288"/>
    </location>
    <ligand>
        <name>substrate</name>
    </ligand>
</feature>
<feature type="binding site" evidence="2">
    <location>
        <position position="351"/>
    </location>
    <ligand>
        <name>substrate</name>
    </ligand>
</feature>
<feature type="glycosylation site" description="N-linked (GlcNAc...) asparagine" evidence="4">
    <location>
        <position position="120"/>
    </location>
</feature>
<feature type="glycosylation site" description="N-linked (GlcNAc...) asparagine" evidence="4">
    <location>
        <position position="270"/>
    </location>
</feature>
<sequence>MKVPRLLLALGGLASIHIASALPQGAVERDMHATSAVVHGGNVKTKFPSTTGLKFTIDGETGYFAGSNSYWIGFLTNNADVDLVFQHMKESGLKILRVWGFNDVNTKPATGTVWYQLHANGTSTINTGPDGLQRLDYVVHSAERHGIKLIINFVNNWNDYGGINSYLQAYGGASNEDFYNSEPMQKAYRAYIKEVVSRYIDSPAVFAWELANEPRCKGCDTSVLHSWIEKTSRYIKSLDKKHMVTTGEEGFGLDLMSDGSYPFTYVEGGNFTDTLSIPTIDFGTFHLYPSSWGTTNDWGNLWVEAHGAACKAAGKPRLFEEYGVTADHCALEKPWQTTALKTKGVSGDLYWQYGDTLSTGPSPDDGNTFYYGTDEFDCLVSDHVAAIDEMEKHGRH</sequence>
<comment type="function">
    <text evidence="1">Endo-1,4-mannanase, a crucial enzyme for depolymerization of seed galactomannans and wood galactoglucomannans.</text>
</comment>
<comment type="catalytic activity">
    <reaction>
        <text>Random hydrolysis of (1-&gt;4)-beta-D-mannosidic linkages in mannans, galactomannans and glucomannans.</text>
        <dbReference type="EC" id="3.2.1.78"/>
    </reaction>
</comment>
<comment type="subcellular location">
    <subcellularLocation>
        <location evidence="1">Secreted</location>
    </subcellularLocation>
</comment>
<comment type="similarity">
    <text evidence="5">Belongs to the glycosyl hydrolase 5 (cellulase A) family.</text>
</comment>
<comment type="sequence caution" evidence="5">
    <conflict type="erroneous initiation">
        <sequence resource="EMBL-CDS" id="EAU37631"/>
    </conflict>
    <text>Extended N-terminus.</text>
</comment>
<gene>
    <name type="primary">manA-2</name>
    <name type="synonym">man1-2</name>
    <name type="ORF">ATEG_02669</name>
</gene>
<name>MANA2_ASPTN</name>
<organism>
    <name type="scientific">Aspergillus terreus (strain NIH 2624 / FGSC A1156)</name>
    <dbReference type="NCBI Taxonomy" id="341663"/>
    <lineage>
        <taxon>Eukaryota</taxon>
        <taxon>Fungi</taxon>
        <taxon>Dikarya</taxon>
        <taxon>Ascomycota</taxon>
        <taxon>Pezizomycotina</taxon>
        <taxon>Eurotiomycetes</taxon>
        <taxon>Eurotiomycetidae</taxon>
        <taxon>Eurotiales</taxon>
        <taxon>Aspergillaceae</taxon>
        <taxon>Aspergillus</taxon>
        <taxon>Aspergillus subgen. Circumdati</taxon>
    </lineage>
</organism>
<proteinExistence type="inferred from homology"/>
<evidence type="ECO:0000250" key="1"/>
<evidence type="ECO:0000250" key="2">
    <source>
        <dbReference type="UniProtKB" id="B4XC07"/>
    </source>
</evidence>
<evidence type="ECO:0000250" key="3">
    <source>
        <dbReference type="UniProtKB" id="Q99036"/>
    </source>
</evidence>
<evidence type="ECO:0000255" key="4"/>
<evidence type="ECO:0000305" key="5"/>